<reference key="1">
    <citation type="journal article" date="2003" name="Proc. Natl. Acad. Sci. U.S.A.">
        <title>Complete genome sequence of the Q-fever pathogen, Coxiella burnetii.</title>
        <authorList>
            <person name="Seshadri R."/>
            <person name="Paulsen I.T."/>
            <person name="Eisen J.A."/>
            <person name="Read T.D."/>
            <person name="Nelson K.E."/>
            <person name="Nelson W.C."/>
            <person name="Ward N.L."/>
            <person name="Tettelin H."/>
            <person name="Davidsen T.M."/>
            <person name="Beanan M.J."/>
            <person name="DeBoy R.T."/>
            <person name="Daugherty S.C."/>
            <person name="Brinkac L.M."/>
            <person name="Madupu R."/>
            <person name="Dodson R.J."/>
            <person name="Khouri H.M."/>
            <person name="Lee K.H."/>
            <person name="Carty H.A."/>
            <person name="Scanlan D."/>
            <person name="Heinzen R.A."/>
            <person name="Thompson H.A."/>
            <person name="Samuel J.E."/>
            <person name="Fraser C.M."/>
            <person name="Heidelberg J.F."/>
        </authorList>
    </citation>
    <scope>NUCLEOTIDE SEQUENCE [LARGE SCALE GENOMIC DNA]</scope>
    <source>
        <strain>RSA 493 / Nine Mile phase I</strain>
    </source>
</reference>
<keyword id="KW-0068">Autocatalytic cleavage</keyword>
<keyword id="KW-0963">Cytoplasm</keyword>
<keyword id="KW-0210">Decarboxylase</keyword>
<keyword id="KW-0456">Lyase</keyword>
<keyword id="KW-0566">Pantothenate biosynthesis</keyword>
<keyword id="KW-0670">Pyruvate</keyword>
<keyword id="KW-1185">Reference proteome</keyword>
<keyword id="KW-0704">Schiff base</keyword>
<keyword id="KW-0865">Zymogen</keyword>
<dbReference type="EC" id="4.1.1.11" evidence="1"/>
<dbReference type="EMBL" id="AE016828">
    <property type="protein sequence ID" value="AAO89974.1"/>
    <property type="molecule type" value="Genomic_DNA"/>
</dbReference>
<dbReference type="RefSeq" id="NP_819460.1">
    <property type="nucleotide sequence ID" value="NC_002971.4"/>
</dbReference>
<dbReference type="RefSeq" id="WP_005771942.1">
    <property type="nucleotide sequence ID" value="NZ_CDBG01000001.1"/>
</dbReference>
<dbReference type="SMR" id="Q83EA4"/>
<dbReference type="STRING" id="227377.CBU_0422"/>
<dbReference type="DNASU" id="1208306"/>
<dbReference type="EnsemblBacteria" id="AAO89974">
    <property type="protein sequence ID" value="AAO89974"/>
    <property type="gene ID" value="CBU_0422"/>
</dbReference>
<dbReference type="GeneID" id="1208306"/>
<dbReference type="KEGG" id="cbu:CBU_0422"/>
<dbReference type="PATRIC" id="fig|227377.7.peg.411"/>
<dbReference type="eggNOG" id="COG0853">
    <property type="taxonomic scope" value="Bacteria"/>
</dbReference>
<dbReference type="HOGENOM" id="CLU_115305_2_2_6"/>
<dbReference type="OrthoDB" id="9803983at2"/>
<dbReference type="UniPathway" id="UPA00028">
    <property type="reaction ID" value="UER00002"/>
</dbReference>
<dbReference type="Proteomes" id="UP000002671">
    <property type="component" value="Chromosome"/>
</dbReference>
<dbReference type="GO" id="GO:0005829">
    <property type="term" value="C:cytosol"/>
    <property type="evidence" value="ECO:0000318"/>
    <property type="project" value="GO_Central"/>
</dbReference>
<dbReference type="GO" id="GO:0004068">
    <property type="term" value="F:aspartate 1-decarboxylase activity"/>
    <property type="evidence" value="ECO:0000318"/>
    <property type="project" value="GO_Central"/>
</dbReference>
<dbReference type="GO" id="GO:0006523">
    <property type="term" value="P:alanine biosynthetic process"/>
    <property type="evidence" value="ECO:0000318"/>
    <property type="project" value="GO_Central"/>
</dbReference>
<dbReference type="GO" id="GO:0015940">
    <property type="term" value="P:pantothenate biosynthetic process"/>
    <property type="evidence" value="ECO:0000318"/>
    <property type="project" value="GO_Central"/>
</dbReference>
<dbReference type="CDD" id="cd06919">
    <property type="entry name" value="Asp_decarbox"/>
    <property type="match status" value="1"/>
</dbReference>
<dbReference type="Gene3D" id="2.40.40.20">
    <property type="match status" value="1"/>
</dbReference>
<dbReference type="HAMAP" id="MF_00446">
    <property type="entry name" value="PanD"/>
    <property type="match status" value="1"/>
</dbReference>
<dbReference type="InterPro" id="IPR009010">
    <property type="entry name" value="Asp_de-COase-like_dom_sf"/>
</dbReference>
<dbReference type="InterPro" id="IPR003190">
    <property type="entry name" value="Asp_decarbox"/>
</dbReference>
<dbReference type="NCBIfam" id="TIGR00223">
    <property type="entry name" value="panD"/>
    <property type="match status" value="1"/>
</dbReference>
<dbReference type="PANTHER" id="PTHR21012">
    <property type="entry name" value="ASPARTATE 1-DECARBOXYLASE"/>
    <property type="match status" value="1"/>
</dbReference>
<dbReference type="PANTHER" id="PTHR21012:SF0">
    <property type="entry name" value="ASPARTATE 1-DECARBOXYLASE"/>
    <property type="match status" value="1"/>
</dbReference>
<dbReference type="Pfam" id="PF02261">
    <property type="entry name" value="Asp_decarbox"/>
    <property type="match status" value="1"/>
</dbReference>
<dbReference type="PIRSF" id="PIRSF006246">
    <property type="entry name" value="Asp_decarbox"/>
    <property type="match status" value="1"/>
</dbReference>
<dbReference type="SUPFAM" id="SSF50692">
    <property type="entry name" value="ADC-like"/>
    <property type="match status" value="1"/>
</dbReference>
<feature type="chain" id="PRO_0000306959" description="Aspartate 1-decarboxylase beta chain" evidence="1">
    <location>
        <begin position="1"/>
        <end position="24"/>
    </location>
</feature>
<feature type="chain" id="PRO_0000306960" description="Aspartate 1-decarboxylase alpha chain" evidence="1">
    <location>
        <begin position="25"/>
        <end position="111"/>
    </location>
</feature>
<feature type="active site" description="Schiff-base intermediate with substrate; via pyruvic acid" evidence="1">
    <location>
        <position position="25"/>
    </location>
</feature>
<feature type="active site" description="Proton donor" evidence="1">
    <location>
        <position position="58"/>
    </location>
</feature>
<feature type="binding site" evidence="1">
    <location>
        <position position="57"/>
    </location>
    <ligand>
        <name>substrate</name>
    </ligand>
</feature>
<feature type="binding site" evidence="1">
    <location>
        <begin position="73"/>
        <end position="75"/>
    </location>
    <ligand>
        <name>substrate</name>
    </ligand>
</feature>
<feature type="modified residue" description="Pyruvic acid (Ser)" evidence="1">
    <location>
        <position position="25"/>
    </location>
</feature>
<comment type="function">
    <text evidence="1">Catalyzes the pyruvoyl-dependent decarboxylation of aspartate to produce beta-alanine.</text>
</comment>
<comment type="catalytic activity">
    <reaction evidence="1">
        <text>L-aspartate + H(+) = beta-alanine + CO2</text>
        <dbReference type="Rhea" id="RHEA:19497"/>
        <dbReference type="ChEBI" id="CHEBI:15378"/>
        <dbReference type="ChEBI" id="CHEBI:16526"/>
        <dbReference type="ChEBI" id="CHEBI:29991"/>
        <dbReference type="ChEBI" id="CHEBI:57966"/>
        <dbReference type="EC" id="4.1.1.11"/>
    </reaction>
</comment>
<comment type="cofactor">
    <cofactor evidence="1">
        <name>pyruvate</name>
        <dbReference type="ChEBI" id="CHEBI:15361"/>
    </cofactor>
    <text evidence="1">Binds 1 pyruvoyl group covalently per subunit.</text>
</comment>
<comment type="pathway">
    <text evidence="1">Cofactor biosynthesis; (R)-pantothenate biosynthesis; beta-alanine from L-aspartate: step 1/1.</text>
</comment>
<comment type="subunit">
    <text evidence="1">Heterooctamer of four alpha and four beta subunits.</text>
</comment>
<comment type="subcellular location">
    <subcellularLocation>
        <location evidence="1">Cytoplasm</location>
    </subcellularLocation>
</comment>
<comment type="PTM">
    <text evidence="1">Is synthesized initially as an inactive proenzyme, which is activated by self-cleavage at a specific serine bond to produce a beta-subunit with a hydroxyl group at its C-terminus and an alpha-subunit with a pyruvoyl group at its N-terminus.</text>
</comment>
<comment type="similarity">
    <text evidence="1">Belongs to the PanD family.</text>
</comment>
<accession>Q83EA4</accession>
<sequence>MLISVLKSKISYATITQKELFYIGSITIDEAIMERAQLTINEQVQIVNLNNGERLETYVIPGKRNSNIIALNGPAARKGEIGDQLFILSYALIDPTQEKLDPVLVDLKLND</sequence>
<organism>
    <name type="scientific">Coxiella burnetii (strain RSA 493 / Nine Mile phase I)</name>
    <dbReference type="NCBI Taxonomy" id="227377"/>
    <lineage>
        <taxon>Bacteria</taxon>
        <taxon>Pseudomonadati</taxon>
        <taxon>Pseudomonadota</taxon>
        <taxon>Gammaproteobacteria</taxon>
        <taxon>Legionellales</taxon>
        <taxon>Coxiellaceae</taxon>
        <taxon>Coxiella</taxon>
    </lineage>
</organism>
<protein>
    <recommendedName>
        <fullName evidence="1">Aspartate 1-decarboxylase</fullName>
        <ecNumber evidence="1">4.1.1.11</ecNumber>
    </recommendedName>
    <alternativeName>
        <fullName evidence="1">Aspartate alpha-decarboxylase</fullName>
    </alternativeName>
    <component>
        <recommendedName>
            <fullName evidence="1">Aspartate 1-decarboxylase beta chain</fullName>
        </recommendedName>
    </component>
    <component>
        <recommendedName>
            <fullName evidence="1">Aspartate 1-decarboxylase alpha chain</fullName>
        </recommendedName>
    </component>
</protein>
<proteinExistence type="inferred from homology"/>
<gene>
    <name evidence="1" type="primary">panD</name>
    <name type="ordered locus">CBU_0422</name>
</gene>
<name>PAND_COXBU</name>
<evidence type="ECO:0000255" key="1">
    <source>
        <dbReference type="HAMAP-Rule" id="MF_00446"/>
    </source>
</evidence>